<gene>
    <name evidence="1" type="primary">rpsZ</name>
    <name evidence="1" type="synonym">rpsN</name>
    <name type="ordered locus">SUN_2334</name>
</gene>
<accession>A6QCR1</accession>
<feature type="chain" id="PRO_1000067969" description="Small ribosomal subunit protein uS14">
    <location>
        <begin position="1"/>
        <end position="61"/>
    </location>
</feature>
<feature type="binding site" evidence="1">
    <location>
        <position position="24"/>
    </location>
    <ligand>
        <name>Zn(2+)</name>
        <dbReference type="ChEBI" id="CHEBI:29105"/>
    </ligand>
</feature>
<feature type="binding site" evidence="1">
    <location>
        <position position="27"/>
    </location>
    <ligand>
        <name>Zn(2+)</name>
        <dbReference type="ChEBI" id="CHEBI:29105"/>
    </ligand>
</feature>
<feature type="binding site" evidence="1">
    <location>
        <position position="40"/>
    </location>
    <ligand>
        <name>Zn(2+)</name>
        <dbReference type="ChEBI" id="CHEBI:29105"/>
    </ligand>
</feature>
<feature type="binding site" evidence="1">
    <location>
        <position position="43"/>
    </location>
    <ligand>
        <name>Zn(2+)</name>
        <dbReference type="ChEBI" id="CHEBI:29105"/>
    </ligand>
</feature>
<keyword id="KW-0479">Metal-binding</keyword>
<keyword id="KW-0687">Ribonucleoprotein</keyword>
<keyword id="KW-0689">Ribosomal protein</keyword>
<keyword id="KW-0694">RNA-binding</keyword>
<keyword id="KW-0699">rRNA-binding</keyword>
<keyword id="KW-0862">Zinc</keyword>
<name>RS14Z_SULNB</name>
<sequence>MAKKSMIAKQQRKAKFSTQAYTRCNICGRPHSVYRDFGLCRVCLRKMANEGLIPGMRKASW</sequence>
<comment type="function">
    <text evidence="1">Binds 16S rRNA, required for the assembly of 30S particles and may also be responsible for determining the conformation of the 16S rRNA at the A site.</text>
</comment>
<comment type="cofactor">
    <cofactor evidence="1">
        <name>Zn(2+)</name>
        <dbReference type="ChEBI" id="CHEBI:29105"/>
    </cofactor>
    <text evidence="1">Binds 1 zinc ion per subunit.</text>
</comment>
<comment type="subunit">
    <text evidence="1">Part of the 30S ribosomal subunit. Contacts proteins S3 and S10.</text>
</comment>
<comment type="similarity">
    <text evidence="1">Belongs to the universal ribosomal protein uS14 family. Zinc-binding uS14 subfamily.</text>
</comment>
<evidence type="ECO:0000255" key="1">
    <source>
        <dbReference type="HAMAP-Rule" id="MF_01364"/>
    </source>
</evidence>
<evidence type="ECO:0000305" key="2"/>
<protein>
    <recommendedName>
        <fullName evidence="1">Small ribosomal subunit protein uS14</fullName>
    </recommendedName>
    <alternativeName>
        <fullName evidence="2">30S ribosomal protein S14 type Z</fullName>
    </alternativeName>
</protein>
<organism>
    <name type="scientific">Sulfurovum sp. (strain NBC37-1)</name>
    <dbReference type="NCBI Taxonomy" id="387093"/>
    <lineage>
        <taxon>Bacteria</taxon>
        <taxon>Pseudomonadati</taxon>
        <taxon>Campylobacterota</taxon>
        <taxon>Epsilonproteobacteria</taxon>
        <taxon>Campylobacterales</taxon>
        <taxon>Sulfurovaceae</taxon>
        <taxon>Sulfurovum</taxon>
    </lineage>
</organism>
<proteinExistence type="inferred from homology"/>
<dbReference type="EMBL" id="AP009179">
    <property type="protein sequence ID" value="BAF73270.1"/>
    <property type="molecule type" value="Genomic_DNA"/>
</dbReference>
<dbReference type="RefSeq" id="WP_012084111.1">
    <property type="nucleotide sequence ID" value="NC_009663.1"/>
</dbReference>
<dbReference type="SMR" id="A6QCR1"/>
<dbReference type="STRING" id="387093.SUN_2334"/>
<dbReference type="KEGG" id="sun:SUN_2334"/>
<dbReference type="eggNOG" id="COG0199">
    <property type="taxonomic scope" value="Bacteria"/>
</dbReference>
<dbReference type="HOGENOM" id="CLU_139869_3_0_7"/>
<dbReference type="OrthoDB" id="9810484at2"/>
<dbReference type="Proteomes" id="UP000006378">
    <property type="component" value="Chromosome"/>
</dbReference>
<dbReference type="GO" id="GO:0005737">
    <property type="term" value="C:cytoplasm"/>
    <property type="evidence" value="ECO:0007669"/>
    <property type="project" value="UniProtKB-ARBA"/>
</dbReference>
<dbReference type="GO" id="GO:0015935">
    <property type="term" value="C:small ribosomal subunit"/>
    <property type="evidence" value="ECO:0007669"/>
    <property type="project" value="TreeGrafter"/>
</dbReference>
<dbReference type="GO" id="GO:0019843">
    <property type="term" value="F:rRNA binding"/>
    <property type="evidence" value="ECO:0007669"/>
    <property type="project" value="UniProtKB-UniRule"/>
</dbReference>
<dbReference type="GO" id="GO:0003735">
    <property type="term" value="F:structural constituent of ribosome"/>
    <property type="evidence" value="ECO:0007669"/>
    <property type="project" value="InterPro"/>
</dbReference>
<dbReference type="GO" id="GO:0008270">
    <property type="term" value="F:zinc ion binding"/>
    <property type="evidence" value="ECO:0007669"/>
    <property type="project" value="UniProtKB-UniRule"/>
</dbReference>
<dbReference type="GO" id="GO:0006412">
    <property type="term" value="P:translation"/>
    <property type="evidence" value="ECO:0007669"/>
    <property type="project" value="UniProtKB-UniRule"/>
</dbReference>
<dbReference type="FunFam" id="4.10.830.10:FF:000001">
    <property type="entry name" value="30S ribosomal protein S14 type Z"/>
    <property type="match status" value="1"/>
</dbReference>
<dbReference type="Gene3D" id="4.10.830.10">
    <property type="entry name" value="30s Ribosomal Protein S14, Chain N"/>
    <property type="match status" value="1"/>
</dbReference>
<dbReference type="HAMAP" id="MF_01364_B">
    <property type="entry name" value="Ribosomal_uS14_2_B"/>
    <property type="match status" value="1"/>
</dbReference>
<dbReference type="InterPro" id="IPR001209">
    <property type="entry name" value="Ribosomal_uS14"/>
</dbReference>
<dbReference type="InterPro" id="IPR023053">
    <property type="entry name" value="Ribosomal_uS14_bact"/>
</dbReference>
<dbReference type="InterPro" id="IPR018271">
    <property type="entry name" value="Ribosomal_uS14_CS"/>
</dbReference>
<dbReference type="InterPro" id="IPR043140">
    <property type="entry name" value="Ribosomal_uS14_sf"/>
</dbReference>
<dbReference type="NCBIfam" id="NF005974">
    <property type="entry name" value="PRK08061.1"/>
    <property type="match status" value="1"/>
</dbReference>
<dbReference type="PANTHER" id="PTHR19836">
    <property type="entry name" value="30S RIBOSOMAL PROTEIN S14"/>
    <property type="match status" value="1"/>
</dbReference>
<dbReference type="PANTHER" id="PTHR19836:SF19">
    <property type="entry name" value="SMALL RIBOSOMAL SUBUNIT PROTEIN US14M"/>
    <property type="match status" value="1"/>
</dbReference>
<dbReference type="Pfam" id="PF00253">
    <property type="entry name" value="Ribosomal_S14"/>
    <property type="match status" value="1"/>
</dbReference>
<dbReference type="SUPFAM" id="SSF57716">
    <property type="entry name" value="Glucocorticoid receptor-like (DNA-binding domain)"/>
    <property type="match status" value="1"/>
</dbReference>
<dbReference type="PROSITE" id="PS00527">
    <property type="entry name" value="RIBOSOMAL_S14"/>
    <property type="match status" value="1"/>
</dbReference>
<reference key="1">
    <citation type="journal article" date="2007" name="Proc. Natl. Acad. Sci. U.S.A.">
        <title>Deep-sea vent epsilon-proteobacterial genomes provide insights into emergence of pathogens.</title>
        <authorList>
            <person name="Nakagawa S."/>
            <person name="Takaki Y."/>
            <person name="Shimamura S."/>
            <person name="Reysenbach A.-L."/>
            <person name="Takai K."/>
            <person name="Horikoshi K."/>
        </authorList>
    </citation>
    <scope>NUCLEOTIDE SEQUENCE [LARGE SCALE GENOMIC DNA]</scope>
    <source>
        <strain>NBC37-1</strain>
    </source>
</reference>